<organism>
    <name type="scientific">Methanococcus maripaludis (strain C6 / ATCC BAA-1332)</name>
    <dbReference type="NCBI Taxonomy" id="444158"/>
    <lineage>
        <taxon>Archaea</taxon>
        <taxon>Methanobacteriati</taxon>
        <taxon>Methanobacteriota</taxon>
        <taxon>Methanomada group</taxon>
        <taxon>Methanococci</taxon>
        <taxon>Methanococcales</taxon>
        <taxon>Methanococcaceae</taxon>
        <taxon>Methanococcus</taxon>
    </lineage>
</organism>
<reference key="1">
    <citation type="submission" date="2007-10" db="EMBL/GenBank/DDBJ databases">
        <title>Complete sequence of Methanococcus maripaludis C6.</title>
        <authorList>
            <consortium name="US DOE Joint Genome Institute"/>
            <person name="Copeland A."/>
            <person name="Lucas S."/>
            <person name="Lapidus A."/>
            <person name="Barry K."/>
            <person name="Glavina del Rio T."/>
            <person name="Dalin E."/>
            <person name="Tice H."/>
            <person name="Pitluck S."/>
            <person name="Clum A."/>
            <person name="Schmutz J."/>
            <person name="Larimer F."/>
            <person name="Land M."/>
            <person name="Hauser L."/>
            <person name="Kyrpides N."/>
            <person name="Mikhailova N."/>
            <person name="Sieprawska-Lupa M."/>
            <person name="Whitman W.B."/>
            <person name="Richardson P."/>
        </authorList>
    </citation>
    <scope>NUCLEOTIDE SEQUENCE [LARGE SCALE GENOMIC DNA]</scope>
    <source>
        <strain>C6 / ATCC BAA-1332</strain>
    </source>
</reference>
<accession>A9A8U1</accession>
<proteinExistence type="inferred from homology"/>
<name>HIS6_METM6</name>
<sequence length="272" mass="29939">MLTKRIIPCLDIKEGRVVKGTNFVELKDAGDPVELSKIYNEQGADELVFLDITASFEKRGIIIDVVKRTAEQVFIPLTVGGGIKTVDDFRKILRAGADKISINTSAVKTPKLIKEASEIFGTQCVVVAMDVKRNYITNPRDENLKDKNVFETKHGSCWFEVYIYGGREGTGIDAIEWAKKVEILGAGEILLTSMDADGTKDGYDLVLTRAISEKVKLPIIASGGCGNAKHVVDAFKDGKADAALMASILHYRECTVNDLKKEVEKNNIPVRF</sequence>
<comment type="function">
    <text evidence="1">IGPS catalyzes the conversion of PRFAR and glutamine to IGP, AICAR and glutamate. The HisF subunit catalyzes the cyclization activity that produces IGP and AICAR from PRFAR using the ammonia provided by the HisH subunit.</text>
</comment>
<comment type="catalytic activity">
    <reaction evidence="1">
        <text>5-[(5-phospho-1-deoxy-D-ribulos-1-ylimino)methylamino]-1-(5-phospho-beta-D-ribosyl)imidazole-4-carboxamide + L-glutamine = D-erythro-1-(imidazol-4-yl)glycerol 3-phosphate + 5-amino-1-(5-phospho-beta-D-ribosyl)imidazole-4-carboxamide + L-glutamate + H(+)</text>
        <dbReference type="Rhea" id="RHEA:24793"/>
        <dbReference type="ChEBI" id="CHEBI:15378"/>
        <dbReference type="ChEBI" id="CHEBI:29985"/>
        <dbReference type="ChEBI" id="CHEBI:58278"/>
        <dbReference type="ChEBI" id="CHEBI:58359"/>
        <dbReference type="ChEBI" id="CHEBI:58475"/>
        <dbReference type="ChEBI" id="CHEBI:58525"/>
        <dbReference type="EC" id="4.3.2.10"/>
    </reaction>
</comment>
<comment type="pathway">
    <text evidence="1">Amino-acid biosynthesis; L-histidine biosynthesis; L-histidine from 5-phospho-alpha-D-ribose 1-diphosphate: step 5/9.</text>
</comment>
<comment type="subunit">
    <text evidence="1">Heterodimer of HisH and HisF.</text>
</comment>
<comment type="subcellular location">
    <subcellularLocation>
        <location evidence="1">Cytoplasm</location>
    </subcellularLocation>
</comment>
<comment type="similarity">
    <text evidence="1">Belongs to the HisA/HisF family.</text>
</comment>
<protein>
    <recommendedName>
        <fullName evidence="1">Imidazole glycerol phosphate synthase subunit HisF</fullName>
        <ecNumber evidence="1">4.3.2.10</ecNumber>
    </recommendedName>
    <alternativeName>
        <fullName evidence="1">IGP synthase cyclase subunit</fullName>
    </alternativeName>
    <alternativeName>
        <fullName evidence="1">IGP synthase subunit HisF</fullName>
    </alternativeName>
    <alternativeName>
        <fullName evidence="1">ImGP synthase subunit HisF</fullName>
        <shortName evidence="1">IGPS subunit HisF</shortName>
    </alternativeName>
</protein>
<dbReference type="EC" id="4.3.2.10" evidence="1"/>
<dbReference type="EMBL" id="CP000867">
    <property type="protein sequence ID" value="ABX01764.1"/>
    <property type="molecule type" value="Genomic_DNA"/>
</dbReference>
<dbReference type="SMR" id="A9A8U1"/>
<dbReference type="STRING" id="444158.MmarC6_0949"/>
<dbReference type="KEGG" id="mmx:MmarC6_0949"/>
<dbReference type="eggNOG" id="arCOG00617">
    <property type="taxonomic scope" value="Archaea"/>
</dbReference>
<dbReference type="HOGENOM" id="CLU_048577_4_0_2"/>
<dbReference type="OrthoDB" id="6261at2157"/>
<dbReference type="PhylomeDB" id="A9A8U1"/>
<dbReference type="UniPathway" id="UPA00031">
    <property type="reaction ID" value="UER00010"/>
</dbReference>
<dbReference type="GO" id="GO:0005737">
    <property type="term" value="C:cytoplasm"/>
    <property type="evidence" value="ECO:0007669"/>
    <property type="project" value="UniProtKB-SubCell"/>
</dbReference>
<dbReference type="GO" id="GO:0000107">
    <property type="term" value="F:imidazoleglycerol-phosphate synthase activity"/>
    <property type="evidence" value="ECO:0007669"/>
    <property type="project" value="UniProtKB-UniRule"/>
</dbReference>
<dbReference type="GO" id="GO:0016829">
    <property type="term" value="F:lyase activity"/>
    <property type="evidence" value="ECO:0007669"/>
    <property type="project" value="UniProtKB-KW"/>
</dbReference>
<dbReference type="GO" id="GO:0000105">
    <property type="term" value="P:L-histidine biosynthetic process"/>
    <property type="evidence" value="ECO:0007669"/>
    <property type="project" value="UniProtKB-UniRule"/>
</dbReference>
<dbReference type="CDD" id="cd04731">
    <property type="entry name" value="HisF"/>
    <property type="match status" value="1"/>
</dbReference>
<dbReference type="FunFam" id="3.20.20.70:FF:000006">
    <property type="entry name" value="Imidazole glycerol phosphate synthase subunit HisF"/>
    <property type="match status" value="1"/>
</dbReference>
<dbReference type="Gene3D" id="3.20.20.70">
    <property type="entry name" value="Aldolase class I"/>
    <property type="match status" value="1"/>
</dbReference>
<dbReference type="HAMAP" id="MF_01013">
    <property type="entry name" value="HisF"/>
    <property type="match status" value="1"/>
</dbReference>
<dbReference type="InterPro" id="IPR013785">
    <property type="entry name" value="Aldolase_TIM"/>
</dbReference>
<dbReference type="InterPro" id="IPR006062">
    <property type="entry name" value="His_biosynth"/>
</dbReference>
<dbReference type="InterPro" id="IPR004651">
    <property type="entry name" value="HisF"/>
</dbReference>
<dbReference type="InterPro" id="IPR050064">
    <property type="entry name" value="IGPS_HisA/HisF"/>
</dbReference>
<dbReference type="InterPro" id="IPR011060">
    <property type="entry name" value="RibuloseP-bd_barrel"/>
</dbReference>
<dbReference type="NCBIfam" id="TIGR00735">
    <property type="entry name" value="hisF"/>
    <property type="match status" value="1"/>
</dbReference>
<dbReference type="PANTHER" id="PTHR21235:SF2">
    <property type="entry name" value="IMIDAZOLE GLYCEROL PHOSPHATE SYNTHASE HISHF"/>
    <property type="match status" value="1"/>
</dbReference>
<dbReference type="PANTHER" id="PTHR21235">
    <property type="entry name" value="IMIDAZOLE GLYCEROL PHOSPHATE SYNTHASE SUBUNIT HISF/H IGP SYNTHASE SUBUNIT HISF/H"/>
    <property type="match status" value="1"/>
</dbReference>
<dbReference type="Pfam" id="PF00977">
    <property type="entry name" value="His_biosynth"/>
    <property type="match status" value="1"/>
</dbReference>
<dbReference type="SUPFAM" id="SSF51366">
    <property type="entry name" value="Ribulose-phoshate binding barrel"/>
    <property type="match status" value="1"/>
</dbReference>
<gene>
    <name evidence="1" type="primary">hisF</name>
    <name type="ordered locus">MmarC6_0949</name>
</gene>
<feature type="chain" id="PRO_1000190606" description="Imidazole glycerol phosphate synthase subunit HisF">
    <location>
        <begin position="1"/>
        <end position="272"/>
    </location>
</feature>
<feature type="active site" evidence="1">
    <location>
        <position position="11"/>
    </location>
</feature>
<feature type="active site" evidence="1">
    <location>
        <position position="130"/>
    </location>
</feature>
<evidence type="ECO:0000255" key="1">
    <source>
        <dbReference type="HAMAP-Rule" id="MF_01013"/>
    </source>
</evidence>
<keyword id="KW-0028">Amino-acid biosynthesis</keyword>
<keyword id="KW-0963">Cytoplasm</keyword>
<keyword id="KW-0368">Histidine biosynthesis</keyword>
<keyword id="KW-0456">Lyase</keyword>